<protein>
    <recommendedName>
        <fullName>Protein patched homolog 1</fullName>
        <shortName>PTC</shortName>
        <shortName>PTC1</shortName>
    </recommendedName>
</protein>
<name>PTC1_MOUSE</name>
<comment type="function">
    <text evidence="6">Acts as a receptor for sonic hedgehog (SHH), indian hedgehog (IHH) and desert hedgehog (DHH). Associates with the smoothened protein (SMO) to transduce the hedgehog's proteins signal. Seems to have a tumor suppressor function, as inactivation of this protein is probably a necessary, if not sufficient step for tumorigenesis.</text>
</comment>
<comment type="subunit">
    <text evidence="2 6 7">Interacts with SNX17 (By similarity). Interacts with IHH (PubMed:21537345). Interacts with G-protein coupled receptor GPR37L1 (PubMed:24062445).</text>
</comment>
<comment type="interaction">
    <interactant intactId="EBI-15619523">
        <id>Q61115</id>
    </interactant>
    <interactant intactId="EBI-356767">
        <id>Q96EY1</id>
        <label>DNAJA3</label>
    </interactant>
    <organismsDiffer>true</organismsDiffer>
    <experiments>2</experiments>
</comment>
<comment type="subcellular location">
    <subcellularLocation>
        <location evidence="7">Cell membrane</location>
        <topology evidence="3">Multi-pass membrane protein</topology>
    </subcellularLocation>
</comment>
<comment type="tissue specificity">
    <text evidence="7 9">Detected in cerebellar Bergmann glia cells (at protein level) (PubMed:24062445). In the developing embryo, first detected within the ventral neural tube and later in the somites and limb buds (PubMed:8595881). Expression in the limb buds is restricted to the posterior ectoderm surrounding the zone of polarizing activity (PubMed:8595881). In the adult, expression is seen in brain, lung, liver, kidney and ocular tissues; lower levels in heart, skeletal muscle, and testis (PubMed:8595881).</text>
</comment>
<comment type="developmental stage">
    <text evidence="9">Expressed at very low levels at 7 dpc, is most strongly expressed between 11 and 15 dpc, and persists at moderate levels at 17 dpc (PubMed:8595881). Also expressed in the adult (PubMed:8595881).</text>
</comment>
<comment type="induction">
    <text>Activated by Sonic hedgehog.</text>
</comment>
<comment type="PTM">
    <text evidence="1">Glycosylation is necessary for SHH binding.</text>
</comment>
<comment type="PTM">
    <text evidence="8">In the absence of Hh ligands, ubiquitination by ITCH at Lys-1413 promotes endocytosis and both proteasomal and lysosomal degradation.</text>
</comment>
<comment type="similarity">
    <text evidence="10">Belongs to the patched family.</text>
</comment>
<proteinExistence type="evidence at protein level"/>
<keyword id="KW-0002">3D-structure</keyword>
<keyword id="KW-1003">Cell membrane</keyword>
<keyword id="KW-0325">Glycoprotein</keyword>
<keyword id="KW-1017">Isopeptide bond</keyword>
<keyword id="KW-0472">Membrane</keyword>
<keyword id="KW-0597">Phosphoprotein</keyword>
<keyword id="KW-0675">Receptor</keyword>
<keyword id="KW-1185">Reference proteome</keyword>
<keyword id="KW-0812">Transmembrane</keyword>
<keyword id="KW-1133">Transmembrane helix</keyword>
<keyword id="KW-0832">Ubl conjugation</keyword>
<organism>
    <name type="scientific">Mus musculus</name>
    <name type="common">Mouse</name>
    <dbReference type="NCBI Taxonomy" id="10090"/>
    <lineage>
        <taxon>Eukaryota</taxon>
        <taxon>Metazoa</taxon>
        <taxon>Chordata</taxon>
        <taxon>Craniata</taxon>
        <taxon>Vertebrata</taxon>
        <taxon>Euteleostomi</taxon>
        <taxon>Mammalia</taxon>
        <taxon>Eutheria</taxon>
        <taxon>Euarchontoglires</taxon>
        <taxon>Glires</taxon>
        <taxon>Rodentia</taxon>
        <taxon>Myomorpha</taxon>
        <taxon>Muroidea</taxon>
        <taxon>Muridae</taxon>
        <taxon>Murinae</taxon>
        <taxon>Mus</taxon>
        <taxon>Mus</taxon>
    </lineage>
</organism>
<gene>
    <name type="primary">Ptch1</name>
    <name type="synonym">Ptch</name>
</gene>
<dbReference type="EMBL" id="U46155">
    <property type="protein sequence ID" value="AAC98798.1"/>
    <property type="molecule type" value="mRNA"/>
</dbReference>
<dbReference type="CCDS" id="CCDS26592.1"/>
<dbReference type="PIR" id="T30172">
    <property type="entry name" value="T30172"/>
</dbReference>
<dbReference type="RefSeq" id="NP_032983.1">
    <property type="nucleotide sequence ID" value="NM_008957.3"/>
</dbReference>
<dbReference type="RefSeq" id="XP_006517222.1">
    <property type="nucleotide sequence ID" value="XM_006517159.3"/>
</dbReference>
<dbReference type="PDB" id="6MG8">
    <property type="method" value="EM"/>
    <property type="resolution" value="3.60 A"/>
    <property type="chains" value="A=1-1291"/>
</dbReference>
<dbReference type="PDB" id="7K65">
    <property type="method" value="EM"/>
    <property type="resolution" value="3.40 A"/>
    <property type="chains" value="A=1-1291"/>
</dbReference>
<dbReference type="PDB" id="7V6Y">
    <property type="method" value="EM"/>
    <property type="resolution" value="3.50 A"/>
    <property type="chains" value="A=2-1175"/>
</dbReference>
<dbReference type="PDB" id="7V6Z">
    <property type="method" value="EM"/>
    <property type="resolution" value="3.64 A"/>
    <property type="chains" value="A=2-1175"/>
</dbReference>
<dbReference type="PDBsum" id="6MG8"/>
<dbReference type="PDBsum" id="7K65"/>
<dbReference type="PDBsum" id="7V6Y"/>
<dbReference type="PDBsum" id="7V6Z"/>
<dbReference type="EMDB" id="EMD-22689"/>
<dbReference type="EMDB" id="EMD-31753"/>
<dbReference type="EMDB" id="EMD-31754"/>
<dbReference type="EMDB" id="EMD-9111"/>
<dbReference type="SMR" id="Q61115"/>
<dbReference type="BioGRID" id="202444">
    <property type="interactions" value="4"/>
</dbReference>
<dbReference type="CORUM" id="Q61115"/>
<dbReference type="DIP" id="DIP-60268N"/>
<dbReference type="FunCoup" id="Q61115">
    <property type="interactions" value="815"/>
</dbReference>
<dbReference type="IntAct" id="Q61115">
    <property type="interactions" value="1"/>
</dbReference>
<dbReference type="STRING" id="10090.ENSMUSP00000021921"/>
<dbReference type="GlyCosmos" id="Q61115">
    <property type="glycosylation" value="6 sites, No reported glycans"/>
</dbReference>
<dbReference type="GlyGen" id="Q61115">
    <property type="glycosylation" value="7 sites, 2 N-linked glycans (3 sites)"/>
</dbReference>
<dbReference type="iPTMnet" id="Q61115"/>
<dbReference type="PhosphoSitePlus" id="Q61115"/>
<dbReference type="jPOST" id="Q61115"/>
<dbReference type="PaxDb" id="10090-ENSMUSP00000021921"/>
<dbReference type="ProteomicsDB" id="291582"/>
<dbReference type="Antibodypedia" id="4435">
    <property type="antibodies" value="700 antibodies from 39 providers"/>
</dbReference>
<dbReference type="DNASU" id="19206"/>
<dbReference type="Ensembl" id="ENSMUST00000021921.11">
    <property type="protein sequence ID" value="ENSMUSP00000021921.6"/>
    <property type="gene ID" value="ENSMUSG00000021466.13"/>
</dbReference>
<dbReference type="GeneID" id="19206"/>
<dbReference type="KEGG" id="mmu:19206"/>
<dbReference type="UCSC" id="uc007qxv.1">
    <property type="organism name" value="mouse"/>
</dbReference>
<dbReference type="AGR" id="MGI:105373"/>
<dbReference type="CTD" id="5727"/>
<dbReference type="MGI" id="MGI:105373">
    <property type="gene designation" value="Ptch1"/>
</dbReference>
<dbReference type="VEuPathDB" id="HostDB:ENSMUSG00000021466"/>
<dbReference type="eggNOG" id="KOG1935">
    <property type="taxonomic scope" value="Eukaryota"/>
</dbReference>
<dbReference type="GeneTree" id="ENSGT00940000159011"/>
<dbReference type="InParanoid" id="Q61115"/>
<dbReference type="OMA" id="HLYDTEW"/>
<dbReference type="OrthoDB" id="5873834at2759"/>
<dbReference type="PhylomeDB" id="Q61115"/>
<dbReference type="TreeFam" id="TF106489"/>
<dbReference type="Reactome" id="R-MMU-5610787">
    <property type="pathway name" value="Hedgehog 'off' state"/>
</dbReference>
<dbReference type="Reactome" id="R-MMU-5632681">
    <property type="pathway name" value="Ligand-receptor interactions"/>
</dbReference>
<dbReference type="Reactome" id="R-MMU-5632684">
    <property type="pathway name" value="Hedgehog 'on' state"/>
</dbReference>
<dbReference type="Reactome" id="R-MMU-5635838">
    <property type="pathway name" value="Activation of SMO"/>
</dbReference>
<dbReference type="BioGRID-ORCS" id="19206">
    <property type="hits" value="8 hits in 82 CRISPR screens"/>
</dbReference>
<dbReference type="ChiTaRS" id="Ptch1">
    <property type="organism name" value="mouse"/>
</dbReference>
<dbReference type="PRO" id="PR:Q61115"/>
<dbReference type="Proteomes" id="UP000000589">
    <property type="component" value="Chromosome 13"/>
</dbReference>
<dbReference type="RNAct" id="Q61115">
    <property type="molecule type" value="protein"/>
</dbReference>
<dbReference type="Bgee" id="ENSMUSG00000021466">
    <property type="expression patterns" value="Expressed in associated mesenchyme of midgut and 442 other cell types or tissues"/>
</dbReference>
<dbReference type="ExpressionAtlas" id="Q61115">
    <property type="expression patterns" value="baseline and differential"/>
</dbReference>
<dbReference type="GO" id="GO:0045177">
    <property type="term" value="C:apical part of cell"/>
    <property type="evidence" value="ECO:0007669"/>
    <property type="project" value="Ensembl"/>
</dbReference>
<dbReference type="GO" id="GO:0044295">
    <property type="term" value="C:axonal growth cone"/>
    <property type="evidence" value="ECO:0007669"/>
    <property type="project" value="Ensembl"/>
</dbReference>
<dbReference type="GO" id="GO:0005901">
    <property type="term" value="C:caveola"/>
    <property type="evidence" value="ECO:0007669"/>
    <property type="project" value="Ensembl"/>
</dbReference>
<dbReference type="GO" id="GO:0005929">
    <property type="term" value="C:cilium"/>
    <property type="evidence" value="ECO:0000314"/>
    <property type="project" value="MGI"/>
</dbReference>
<dbReference type="GO" id="GO:0044294">
    <property type="term" value="C:dendritic growth cone"/>
    <property type="evidence" value="ECO:0007669"/>
    <property type="project" value="Ensembl"/>
</dbReference>
<dbReference type="GO" id="GO:0005576">
    <property type="term" value="C:extracellular region"/>
    <property type="evidence" value="ECO:0000304"/>
    <property type="project" value="Roslin"/>
</dbReference>
<dbReference type="GO" id="GO:0005794">
    <property type="term" value="C:Golgi apparatus"/>
    <property type="evidence" value="ECO:0007669"/>
    <property type="project" value="Ensembl"/>
</dbReference>
<dbReference type="GO" id="GO:0030496">
    <property type="term" value="C:midbody"/>
    <property type="evidence" value="ECO:0000314"/>
    <property type="project" value="UniProtKB"/>
</dbReference>
<dbReference type="GO" id="GO:0048471">
    <property type="term" value="C:perinuclear region of cytoplasm"/>
    <property type="evidence" value="ECO:0007669"/>
    <property type="project" value="Ensembl"/>
</dbReference>
<dbReference type="GO" id="GO:0005886">
    <property type="term" value="C:plasma membrane"/>
    <property type="evidence" value="ECO:0000314"/>
    <property type="project" value="BHF-UCL"/>
</dbReference>
<dbReference type="GO" id="GO:0045211">
    <property type="term" value="C:postsynaptic membrane"/>
    <property type="evidence" value="ECO:0007669"/>
    <property type="project" value="Ensembl"/>
</dbReference>
<dbReference type="GO" id="GO:0015485">
    <property type="term" value="F:cholesterol binding"/>
    <property type="evidence" value="ECO:0000304"/>
    <property type="project" value="Roslin"/>
</dbReference>
<dbReference type="GO" id="GO:0030332">
    <property type="term" value="F:cyclin binding"/>
    <property type="evidence" value="ECO:0000353"/>
    <property type="project" value="BHF-UCL"/>
</dbReference>
<dbReference type="GO" id="GO:0097108">
    <property type="term" value="F:hedgehog family protein binding"/>
    <property type="evidence" value="ECO:0007669"/>
    <property type="project" value="Ensembl"/>
</dbReference>
<dbReference type="GO" id="GO:0008158">
    <property type="term" value="F:hedgehog receptor activity"/>
    <property type="evidence" value="ECO:0000304"/>
    <property type="project" value="MGI"/>
</dbReference>
<dbReference type="GO" id="GO:0008201">
    <property type="term" value="F:heparin binding"/>
    <property type="evidence" value="ECO:0000314"/>
    <property type="project" value="Roslin"/>
</dbReference>
<dbReference type="GO" id="GO:0005113">
    <property type="term" value="F:patched binding"/>
    <property type="evidence" value="ECO:0000314"/>
    <property type="project" value="Roslin"/>
</dbReference>
<dbReference type="GO" id="GO:0044877">
    <property type="term" value="F:protein-containing complex binding"/>
    <property type="evidence" value="ECO:0000314"/>
    <property type="project" value="BHF-UCL"/>
</dbReference>
<dbReference type="GO" id="GO:0005119">
    <property type="term" value="F:smoothened binding"/>
    <property type="evidence" value="ECO:0007669"/>
    <property type="project" value="Ensembl"/>
</dbReference>
<dbReference type="GO" id="GO:0008270">
    <property type="term" value="F:zinc ion binding"/>
    <property type="evidence" value="ECO:0000303"/>
    <property type="project" value="Roslin"/>
</dbReference>
<dbReference type="GO" id="GO:0009887">
    <property type="term" value="P:animal organ morphogenesis"/>
    <property type="evidence" value="ECO:0000315"/>
    <property type="project" value="MGI"/>
</dbReference>
<dbReference type="GO" id="GO:0007420">
    <property type="term" value="P:brain development"/>
    <property type="evidence" value="ECO:0000315"/>
    <property type="project" value="BHF-UCL"/>
</dbReference>
<dbReference type="GO" id="GO:0001658">
    <property type="term" value="P:branching involved in ureteric bud morphogenesis"/>
    <property type="evidence" value="ECO:0000315"/>
    <property type="project" value="MGI"/>
</dbReference>
<dbReference type="GO" id="GO:0061005">
    <property type="term" value="P:cell differentiation involved in kidney development"/>
    <property type="evidence" value="ECO:0000316"/>
    <property type="project" value="MGI"/>
</dbReference>
<dbReference type="GO" id="GO:0001709">
    <property type="term" value="P:cell fate determination"/>
    <property type="evidence" value="ECO:0000316"/>
    <property type="project" value="MGI"/>
</dbReference>
<dbReference type="GO" id="GO:0072203">
    <property type="term" value="P:cell proliferation involved in metanephros development"/>
    <property type="evidence" value="ECO:0000315"/>
    <property type="project" value="MGI"/>
</dbReference>
<dbReference type="GO" id="GO:0071397">
    <property type="term" value="P:cellular response to cholesterol"/>
    <property type="evidence" value="ECO:0000270"/>
    <property type="project" value="BHF-UCL"/>
</dbReference>
<dbReference type="GO" id="GO:0071679">
    <property type="term" value="P:commissural neuron axon guidance"/>
    <property type="evidence" value="ECO:0007669"/>
    <property type="project" value="Ensembl"/>
</dbReference>
<dbReference type="GO" id="GO:0021904">
    <property type="term" value="P:dorsal/ventral neural tube patterning"/>
    <property type="evidence" value="ECO:0000315"/>
    <property type="project" value="MGI"/>
</dbReference>
<dbReference type="GO" id="GO:0009953">
    <property type="term" value="P:dorsal/ventral pattern formation"/>
    <property type="evidence" value="ECO:0000316"/>
    <property type="project" value="MGI"/>
</dbReference>
<dbReference type="GO" id="GO:0030326">
    <property type="term" value="P:embryonic limb morphogenesis"/>
    <property type="evidence" value="ECO:0000315"/>
    <property type="project" value="MGI"/>
</dbReference>
<dbReference type="GO" id="GO:0048568">
    <property type="term" value="P:embryonic organ development"/>
    <property type="evidence" value="ECO:0000316"/>
    <property type="project" value="MGI"/>
</dbReference>
<dbReference type="GO" id="GO:0009957">
    <property type="term" value="P:epidermal cell fate specification"/>
    <property type="evidence" value="ECO:0000316"/>
    <property type="project" value="MGI"/>
</dbReference>
<dbReference type="GO" id="GO:0008544">
    <property type="term" value="P:epidermis development"/>
    <property type="evidence" value="ECO:0000315"/>
    <property type="project" value="MGI"/>
</dbReference>
<dbReference type="GO" id="GO:0050673">
    <property type="term" value="P:epithelial cell proliferation"/>
    <property type="evidence" value="ECO:0000315"/>
    <property type="project" value="MGI"/>
</dbReference>
<dbReference type="GO" id="GO:0042593">
    <property type="term" value="P:glucose homeostasis"/>
    <property type="evidence" value="ECO:0000315"/>
    <property type="project" value="MGI"/>
</dbReference>
<dbReference type="GO" id="GO:0003007">
    <property type="term" value="P:heart morphogenesis"/>
    <property type="evidence" value="ECO:0000315"/>
    <property type="project" value="MGI"/>
</dbReference>
<dbReference type="GO" id="GO:0035137">
    <property type="term" value="P:hindlimb morphogenesis"/>
    <property type="evidence" value="ECO:0000315"/>
    <property type="project" value="MGI"/>
</dbReference>
<dbReference type="GO" id="GO:0001701">
    <property type="term" value="P:in utero embryonic development"/>
    <property type="evidence" value="ECO:0000316"/>
    <property type="project" value="MGI"/>
</dbReference>
<dbReference type="GO" id="GO:0043616">
    <property type="term" value="P:keratinocyte proliferation"/>
    <property type="evidence" value="ECO:0000315"/>
    <property type="project" value="MGI"/>
</dbReference>
<dbReference type="GO" id="GO:0097421">
    <property type="term" value="P:liver regeneration"/>
    <property type="evidence" value="ECO:0007669"/>
    <property type="project" value="Ensembl"/>
</dbReference>
<dbReference type="GO" id="GO:0030879">
    <property type="term" value="P:mammary gland development"/>
    <property type="evidence" value="ECO:0000315"/>
    <property type="project" value="MGI"/>
</dbReference>
<dbReference type="GO" id="GO:0060603">
    <property type="term" value="P:mammary gland duct morphogenesis"/>
    <property type="evidence" value="ECO:0000315"/>
    <property type="project" value="MGI"/>
</dbReference>
<dbReference type="GO" id="GO:0060644">
    <property type="term" value="P:mammary gland epithelial cell differentiation"/>
    <property type="evidence" value="ECO:0000315"/>
    <property type="project" value="MGI"/>
</dbReference>
<dbReference type="GO" id="GO:0072205">
    <property type="term" value="P:metanephric collecting duct development"/>
    <property type="evidence" value="ECO:0007669"/>
    <property type="project" value="Ensembl"/>
</dbReference>
<dbReference type="GO" id="GO:0051782">
    <property type="term" value="P:negative regulation of cell division"/>
    <property type="evidence" value="ECO:0000315"/>
    <property type="project" value="BHF-UCL"/>
</dbReference>
<dbReference type="GO" id="GO:0008285">
    <property type="term" value="P:negative regulation of cell population proliferation"/>
    <property type="evidence" value="ECO:0000315"/>
    <property type="project" value="BHF-UCL"/>
</dbReference>
<dbReference type="GO" id="GO:0045892">
    <property type="term" value="P:negative regulation of DNA-templated transcription"/>
    <property type="evidence" value="ECO:0000315"/>
    <property type="project" value="CACAO"/>
</dbReference>
<dbReference type="GO" id="GO:0050680">
    <property type="term" value="P:negative regulation of epithelial cell proliferation"/>
    <property type="evidence" value="ECO:0000315"/>
    <property type="project" value="MGI"/>
</dbReference>
<dbReference type="GO" id="GO:0010839">
    <property type="term" value="P:negative regulation of keratinocyte proliferation"/>
    <property type="evidence" value="ECO:0000315"/>
    <property type="project" value="MGI"/>
</dbReference>
<dbReference type="GO" id="GO:0040015">
    <property type="term" value="P:negative regulation of multicellular organism growth"/>
    <property type="evidence" value="ECO:0000315"/>
    <property type="project" value="MGI"/>
</dbReference>
<dbReference type="GO" id="GO:0045668">
    <property type="term" value="P:negative regulation of osteoblast differentiation"/>
    <property type="evidence" value="ECO:0007669"/>
    <property type="project" value="Ensembl"/>
</dbReference>
<dbReference type="GO" id="GO:0045879">
    <property type="term" value="P:negative regulation of smoothened signaling pathway"/>
    <property type="evidence" value="ECO:0000314"/>
    <property type="project" value="MGI"/>
</dbReference>
<dbReference type="GO" id="GO:2000647">
    <property type="term" value="P:negative regulation of stem cell proliferation"/>
    <property type="evidence" value="ECO:0000315"/>
    <property type="project" value="MGI"/>
</dbReference>
<dbReference type="GO" id="GO:0000122">
    <property type="term" value="P:negative regulation of transcription by RNA polymerase II"/>
    <property type="evidence" value="ECO:0007669"/>
    <property type="project" value="Ensembl"/>
</dbReference>
<dbReference type="GO" id="GO:0021997">
    <property type="term" value="P:neural plate axis specification"/>
    <property type="evidence" value="ECO:0000315"/>
    <property type="project" value="BHF-UCL"/>
</dbReference>
<dbReference type="GO" id="GO:0001843">
    <property type="term" value="P:neural tube closure"/>
    <property type="evidence" value="ECO:0000315"/>
    <property type="project" value="MGI"/>
</dbReference>
<dbReference type="GO" id="GO:0001841">
    <property type="term" value="P:neural tube formation"/>
    <property type="evidence" value="ECO:0000314"/>
    <property type="project" value="Roslin"/>
</dbReference>
<dbReference type="GO" id="GO:0007389">
    <property type="term" value="P:pattern specification process"/>
    <property type="evidence" value="ECO:0000315"/>
    <property type="project" value="MGI"/>
</dbReference>
<dbReference type="GO" id="GO:0060037">
    <property type="term" value="P:pharyngeal system development"/>
    <property type="evidence" value="ECO:0007669"/>
    <property type="project" value="Ensembl"/>
</dbReference>
<dbReference type="GO" id="GO:0010875">
    <property type="term" value="P:positive regulation of cholesterol efflux"/>
    <property type="evidence" value="ECO:0007669"/>
    <property type="project" value="Ensembl"/>
</dbReference>
<dbReference type="GO" id="GO:0045893">
    <property type="term" value="P:positive regulation of DNA-templated transcription"/>
    <property type="evidence" value="ECO:0000315"/>
    <property type="project" value="CACAO"/>
</dbReference>
<dbReference type="GO" id="GO:0045606">
    <property type="term" value="P:positive regulation of epidermal cell differentiation"/>
    <property type="evidence" value="ECO:0000316"/>
    <property type="project" value="MGI"/>
</dbReference>
<dbReference type="GO" id="GO:0030850">
    <property type="term" value="P:prostate gland development"/>
    <property type="evidence" value="ECO:0007669"/>
    <property type="project" value="Ensembl"/>
</dbReference>
<dbReference type="GO" id="GO:0072659">
    <property type="term" value="P:protein localization to plasma membrane"/>
    <property type="evidence" value="ECO:0007669"/>
    <property type="project" value="Ensembl"/>
</dbReference>
<dbReference type="GO" id="GO:0016485">
    <property type="term" value="P:protein processing"/>
    <property type="evidence" value="ECO:0000315"/>
    <property type="project" value="MGI"/>
</dbReference>
<dbReference type="GO" id="GO:0042127">
    <property type="term" value="P:regulation of cell population proliferation"/>
    <property type="evidence" value="ECO:0000315"/>
    <property type="project" value="MGI"/>
</dbReference>
<dbReference type="GO" id="GO:0040008">
    <property type="term" value="P:regulation of growth"/>
    <property type="evidence" value="ECO:0000315"/>
    <property type="project" value="MGI"/>
</dbReference>
<dbReference type="GO" id="GO:0007346">
    <property type="term" value="P:regulation of mitotic cell cycle"/>
    <property type="evidence" value="ECO:0000315"/>
    <property type="project" value="MGI"/>
</dbReference>
<dbReference type="GO" id="GO:0032880">
    <property type="term" value="P:regulation of protein localization"/>
    <property type="evidence" value="ECO:0000314"/>
    <property type="project" value="BHF-UCL"/>
</dbReference>
<dbReference type="GO" id="GO:0010157">
    <property type="term" value="P:response to chlorate"/>
    <property type="evidence" value="ECO:0000314"/>
    <property type="project" value="MGI"/>
</dbReference>
<dbReference type="GO" id="GO:0032355">
    <property type="term" value="P:response to estradiol"/>
    <property type="evidence" value="ECO:0007669"/>
    <property type="project" value="Ensembl"/>
</dbReference>
<dbReference type="GO" id="GO:0009612">
    <property type="term" value="P:response to mechanical stimulus"/>
    <property type="evidence" value="ECO:0007669"/>
    <property type="project" value="Ensembl"/>
</dbReference>
<dbReference type="GO" id="GO:0032526">
    <property type="term" value="P:response to retinoic acid"/>
    <property type="evidence" value="ECO:0007669"/>
    <property type="project" value="Ensembl"/>
</dbReference>
<dbReference type="GO" id="GO:0009410">
    <property type="term" value="P:response to xenobiotic stimulus"/>
    <property type="evidence" value="ECO:0007669"/>
    <property type="project" value="Ensembl"/>
</dbReference>
<dbReference type="GO" id="GO:0007165">
    <property type="term" value="P:signal transduction"/>
    <property type="evidence" value="ECO:0000314"/>
    <property type="project" value="Roslin"/>
</dbReference>
<dbReference type="GO" id="GO:0048745">
    <property type="term" value="P:smooth muscle tissue development"/>
    <property type="evidence" value="ECO:0007669"/>
    <property type="project" value="Ensembl"/>
</dbReference>
<dbReference type="GO" id="GO:0061053">
    <property type="term" value="P:somite development"/>
    <property type="evidence" value="ECO:0000315"/>
    <property type="project" value="BHF-UCL"/>
</dbReference>
<dbReference type="GO" id="GO:0007286">
    <property type="term" value="P:spermatid development"/>
    <property type="evidence" value="ECO:0007669"/>
    <property type="project" value="Ensembl"/>
</dbReference>
<dbReference type="GO" id="GO:0021522">
    <property type="term" value="P:spinal cord motor neuron differentiation"/>
    <property type="evidence" value="ECO:0000316"/>
    <property type="project" value="MGI"/>
</dbReference>
<dbReference type="GO" id="GO:0072089">
    <property type="term" value="P:stem cell proliferation"/>
    <property type="evidence" value="ECO:0000315"/>
    <property type="project" value="MGI"/>
</dbReference>
<dbReference type="FunFam" id="1.20.1640.10:FF:000007">
    <property type="entry name" value="Protein patched homolog 1"/>
    <property type="match status" value="1"/>
</dbReference>
<dbReference type="FunFam" id="1.20.1640.10:FF:000003">
    <property type="entry name" value="protein patched homolog 1"/>
    <property type="match status" value="1"/>
</dbReference>
<dbReference type="Gene3D" id="1.20.1640.10">
    <property type="entry name" value="Multidrug efflux transporter AcrB transmembrane domain"/>
    <property type="match status" value="2"/>
</dbReference>
<dbReference type="InterPro" id="IPR053958">
    <property type="entry name" value="HMGCR/SNAP/NPC1-like_SSD"/>
</dbReference>
<dbReference type="InterPro" id="IPR000731">
    <property type="entry name" value="SSD"/>
</dbReference>
<dbReference type="InterPro" id="IPR004766">
    <property type="entry name" value="TM_rcpt_patched"/>
</dbReference>
<dbReference type="NCBIfam" id="TIGR00918">
    <property type="entry name" value="2A060602"/>
    <property type="match status" value="1"/>
</dbReference>
<dbReference type="PANTHER" id="PTHR46022">
    <property type="entry name" value="PROTEIN PATCHED"/>
    <property type="match status" value="1"/>
</dbReference>
<dbReference type="PANTHER" id="PTHR46022:SF5">
    <property type="entry name" value="PROTEIN PATCHED HOMOLOG 1"/>
    <property type="match status" value="1"/>
</dbReference>
<dbReference type="Pfam" id="PF12349">
    <property type="entry name" value="Sterol-sensing"/>
    <property type="match status" value="1"/>
</dbReference>
<dbReference type="SUPFAM" id="SSF82866">
    <property type="entry name" value="Multidrug efflux transporter AcrB transmembrane domain"/>
    <property type="match status" value="2"/>
</dbReference>
<dbReference type="PROSITE" id="PS50156">
    <property type="entry name" value="SSD"/>
    <property type="match status" value="1"/>
</dbReference>
<evidence type="ECO:0000250" key="1"/>
<evidence type="ECO:0000250" key="2">
    <source>
        <dbReference type="UniProtKB" id="Q13635"/>
    </source>
</evidence>
<evidence type="ECO:0000255" key="3"/>
<evidence type="ECO:0000255" key="4">
    <source>
        <dbReference type="PROSITE-ProRule" id="PRU00199"/>
    </source>
</evidence>
<evidence type="ECO:0000256" key="5">
    <source>
        <dbReference type="SAM" id="MobiDB-lite"/>
    </source>
</evidence>
<evidence type="ECO:0000269" key="6">
    <source>
    </source>
</evidence>
<evidence type="ECO:0000269" key="7">
    <source>
    </source>
</evidence>
<evidence type="ECO:0000269" key="8">
    <source>
    </source>
</evidence>
<evidence type="ECO:0000269" key="9">
    <source>
    </source>
</evidence>
<evidence type="ECO:0000305" key="10"/>
<evidence type="ECO:0007744" key="11">
    <source>
    </source>
</evidence>
<evidence type="ECO:0007829" key="12">
    <source>
        <dbReference type="PDB" id="7K65"/>
    </source>
</evidence>
<evidence type="ECO:0007829" key="13">
    <source>
        <dbReference type="PDB" id="7V6Y"/>
    </source>
</evidence>
<feature type="chain" id="PRO_0000205965" description="Protein patched homolog 1">
    <location>
        <begin position="1"/>
        <end position="1434"/>
    </location>
</feature>
<feature type="topological domain" description="Cytoplasmic" evidence="3">
    <location>
        <begin position="1"/>
        <end position="86"/>
    </location>
</feature>
<feature type="transmembrane region" description="Helical" evidence="3">
    <location>
        <begin position="87"/>
        <end position="107"/>
    </location>
</feature>
<feature type="topological domain" description="Extracellular" evidence="3">
    <location>
        <begin position="108"/>
        <end position="422"/>
    </location>
</feature>
<feature type="transmembrane region" description="Helical" evidence="3">
    <location>
        <begin position="423"/>
        <end position="443"/>
    </location>
</feature>
<feature type="topological domain" description="Cytoplasmic" evidence="3">
    <location>
        <begin position="444"/>
        <end position="458"/>
    </location>
</feature>
<feature type="transmembrane region" description="Helical" evidence="3">
    <location>
        <begin position="459"/>
        <end position="479"/>
    </location>
</feature>
<feature type="topological domain" description="Extracellular" evidence="3">
    <location>
        <begin position="480"/>
        <end position="487"/>
    </location>
</feature>
<feature type="transmembrane region" description="Helical" evidence="3">
    <location>
        <begin position="488"/>
        <end position="508"/>
    </location>
</feature>
<feature type="topological domain" description="Cytoplasmic" evidence="3">
    <location>
        <begin position="509"/>
        <end position="533"/>
    </location>
</feature>
<feature type="transmembrane region" description="Helical" evidence="3">
    <location>
        <begin position="534"/>
        <end position="554"/>
    </location>
</feature>
<feature type="topological domain" description="Extracellular" evidence="3">
    <location>
        <begin position="555"/>
        <end position="563"/>
    </location>
</feature>
<feature type="transmembrane region" description="Helical" evidence="3">
    <location>
        <begin position="564"/>
        <end position="584"/>
    </location>
</feature>
<feature type="topological domain" description="Cytoplasmic" evidence="3">
    <location>
        <begin position="585"/>
        <end position="734"/>
    </location>
</feature>
<feature type="transmembrane region" description="Helical" evidence="3">
    <location>
        <begin position="735"/>
        <end position="755"/>
    </location>
</feature>
<feature type="topological domain" description="Extracellular" evidence="3">
    <location>
        <begin position="756"/>
        <end position="1013"/>
    </location>
</feature>
<feature type="transmembrane region" description="Helical" evidence="3">
    <location>
        <begin position="1014"/>
        <end position="1034"/>
    </location>
</feature>
<feature type="topological domain" description="Cytoplasmic" evidence="3">
    <location>
        <begin position="1035"/>
        <end position="1039"/>
    </location>
</feature>
<feature type="transmembrane region" description="Helical" evidence="3">
    <location>
        <begin position="1040"/>
        <end position="1060"/>
    </location>
</feature>
<feature type="topological domain" description="Extracellular" evidence="3">
    <location>
        <begin position="1061"/>
        <end position="1069"/>
    </location>
</feature>
<feature type="transmembrane region" description="Helical" evidence="3">
    <location>
        <begin position="1070"/>
        <end position="1090"/>
    </location>
</feature>
<feature type="topological domain" description="Cytoplasmic" evidence="3">
    <location>
        <begin position="1091"/>
        <end position="1107"/>
    </location>
</feature>
<feature type="transmembrane region" description="Helical" evidence="3">
    <location>
        <begin position="1108"/>
        <end position="1128"/>
    </location>
</feature>
<feature type="topological domain" description="Extracellular" evidence="3">
    <location>
        <begin position="1129"/>
        <end position="1140"/>
    </location>
</feature>
<feature type="transmembrane region" description="Helical" evidence="3">
    <location>
        <begin position="1141"/>
        <end position="1161"/>
    </location>
</feature>
<feature type="topological domain" description="Cytoplasmic" evidence="3">
    <location>
        <begin position="1162"/>
        <end position="1434"/>
    </location>
</feature>
<feature type="domain" description="SSD" evidence="4">
    <location>
        <begin position="424"/>
        <end position="584"/>
    </location>
</feature>
<feature type="region of interest" description="Disordered" evidence="5">
    <location>
        <begin position="1"/>
        <end position="34"/>
    </location>
</feature>
<feature type="region of interest" description="Disordered" evidence="5">
    <location>
        <begin position="1175"/>
        <end position="1219"/>
    </location>
</feature>
<feature type="region of interest" description="Disordered" evidence="5">
    <location>
        <begin position="1257"/>
        <end position="1348"/>
    </location>
</feature>
<feature type="region of interest" description="Disordered" evidence="5">
    <location>
        <begin position="1368"/>
        <end position="1396"/>
    </location>
</feature>
<feature type="compositionally biased region" description="Low complexity" evidence="5">
    <location>
        <begin position="1"/>
        <end position="13"/>
    </location>
</feature>
<feature type="compositionally biased region" description="Low complexity" evidence="5">
    <location>
        <begin position="1204"/>
        <end position="1213"/>
    </location>
</feature>
<feature type="compositionally biased region" description="Basic and acidic residues" evidence="5">
    <location>
        <begin position="1288"/>
        <end position="1297"/>
    </location>
</feature>
<feature type="compositionally biased region" description="Polar residues" evidence="5">
    <location>
        <begin position="1335"/>
        <end position="1348"/>
    </location>
</feature>
<feature type="modified residue" description="Phosphothreonine" evidence="11">
    <location>
        <position position="1181"/>
    </location>
</feature>
<feature type="modified residue" description="Phosphoserine" evidence="11">
    <location>
        <position position="1183"/>
    </location>
</feature>
<feature type="glycosylation site" description="N-linked (GlcNAc...) asparagine" evidence="3">
    <location>
        <position position="127"/>
    </location>
</feature>
<feature type="glycosylation site" description="N-linked (GlcNAc...) asparagine" evidence="3">
    <location>
        <position position="298"/>
    </location>
</feature>
<feature type="glycosylation site" description="N-linked (GlcNAc...) asparagine" evidence="3">
    <location>
        <position position="335"/>
    </location>
</feature>
<feature type="glycosylation site" description="N-linked (GlcNAc...) asparagine" evidence="3">
    <location>
        <position position="400"/>
    </location>
</feature>
<feature type="glycosylation site" description="N-linked (GlcNAc...) asparagine" evidence="3">
    <location>
        <position position="861"/>
    </location>
</feature>
<feature type="glycosylation site" description="N-linked (GlcNAc...) asparagine" evidence="3">
    <location>
        <position position="986"/>
    </location>
</feature>
<feature type="cross-link" description="Glycyl lysine isopeptide (Lys-Gly) (interchain with G-Cter in ubiquitin)" evidence="8">
    <location>
        <position position="1413"/>
    </location>
</feature>
<feature type="mutagenesis site" description="Accumulates at the plasma membrane, increased half-life and increased CASP9-mediated cell death." evidence="8">
    <original>K</original>
    <variation>R</variation>
    <location>
        <position position="1413"/>
    </location>
</feature>
<feature type="helix" evidence="12">
    <location>
        <begin position="61"/>
        <end position="82"/>
    </location>
</feature>
<feature type="turn" evidence="12">
    <location>
        <begin position="83"/>
        <end position="85"/>
    </location>
</feature>
<feature type="helix" evidence="12">
    <location>
        <begin position="86"/>
        <end position="99"/>
    </location>
</feature>
<feature type="helix" evidence="12">
    <location>
        <begin position="100"/>
        <end position="103"/>
    </location>
</feature>
<feature type="helix" evidence="12">
    <location>
        <begin position="111"/>
        <end position="114"/>
    </location>
</feature>
<feature type="helix" evidence="12">
    <location>
        <begin position="121"/>
        <end position="132"/>
    </location>
</feature>
<feature type="strand" evidence="12">
    <location>
        <begin position="134"/>
        <end position="138"/>
    </location>
</feature>
<feature type="strand" evidence="12">
    <location>
        <begin position="140"/>
        <end position="152"/>
    </location>
</feature>
<feature type="helix" evidence="12">
    <location>
        <begin position="158"/>
        <end position="172"/>
    </location>
</feature>
<feature type="strand" evidence="12">
    <location>
        <begin position="175"/>
        <end position="178"/>
    </location>
</feature>
<feature type="strand" evidence="12">
    <location>
        <begin position="181"/>
        <end position="184"/>
    </location>
</feature>
<feature type="helix" evidence="12">
    <location>
        <begin position="185"/>
        <end position="187"/>
    </location>
</feature>
<feature type="strand" evidence="12">
    <location>
        <begin position="198"/>
        <end position="201"/>
    </location>
</feature>
<feature type="helix" evidence="12">
    <location>
        <begin position="202"/>
        <end position="209"/>
    </location>
</feature>
<feature type="helix" evidence="12">
    <location>
        <begin position="217"/>
        <end position="220"/>
    </location>
</feature>
<feature type="helix" evidence="12">
    <location>
        <begin position="222"/>
        <end position="227"/>
    </location>
</feature>
<feature type="strand" evidence="12">
    <location>
        <begin position="235"/>
        <end position="237"/>
    </location>
</feature>
<feature type="helix" evidence="12">
    <location>
        <begin position="242"/>
        <end position="244"/>
    </location>
</feature>
<feature type="helix" evidence="12">
    <location>
        <begin position="247"/>
        <end position="256"/>
    </location>
</feature>
<feature type="helix" evidence="12">
    <location>
        <begin position="262"/>
        <end position="271"/>
    </location>
</feature>
<feature type="turn" evidence="12">
    <location>
        <begin position="274"/>
        <end position="278"/>
    </location>
</feature>
<feature type="strand" evidence="13">
    <location>
        <begin position="292"/>
        <end position="294"/>
    </location>
</feature>
<feature type="helix" evidence="13">
    <location>
        <begin position="295"/>
        <end position="297"/>
    </location>
</feature>
<feature type="helix" evidence="12">
    <location>
        <begin position="305"/>
        <end position="309"/>
    </location>
</feature>
<feature type="turn" evidence="12">
    <location>
        <begin position="318"/>
        <end position="320"/>
    </location>
</feature>
<feature type="helix" evidence="12">
    <location>
        <begin position="325"/>
        <end position="327"/>
    </location>
</feature>
<feature type="strand" evidence="12">
    <location>
        <begin position="331"/>
        <end position="334"/>
    </location>
</feature>
<feature type="strand" evidence="12">
    <location>
        <begin position="336"/>
        <end position="343"/>
    </location>
</feature>
<feature type="strand" evidence="12">
    <location>
        <begin position="346"/>
        <end position="352"/>
    </location>
</feature>
<feature type="helix" evidence="12">
    <location>
        <begin position="355"/>
        <end position="362"/>
    </location>
</feature>
<feature type="helix" evidence="12">
    <location>
        <begin position="366"/>
        <end position="368"/>
    </location>
</feature>
<feature type="helix" evidence="12">
    <location>
        <begin position="375"/>
        <end position="395"/>
    </location>
</feature>
<feature type="strand" evidence="12">
    <location>
        <begin position="402"/>
        <end position="408"/>
    </location>
</feature>
<feature type="helix" evidence="12">
    <location>
        <begin position="412"/>
        <end position="420"/>
    </location>
</feature>
<feature type="helix" evidence="12">
    <location>
        <begin position="425"/>
        <end position="443"/>
    </location>
</feature>
<feature type="turn" evidence="12">
    <location>
        <begin position="445"/>
        <end position="450"/>
    </location>
</feature>
<feature type="helix" evidence="12">
    <location>
        <begin position="453"/>
        <end position="477"/>
    </location>
</feature>
<feature type="helix" evidence="12">
    <location>
        <begin position="484"/>
        <end position="487"/>
    </location>
</feature>
<feature type="helix" evidence="12">
    <location>
        <begin position="489"/>
        <end position="512"/>
    </location>
</feature>
<feature type="strand" evidence="13">
    <location>
        <begin position="515"/>
        <end position="517"/>
    </location>
</feature>
<feature type="helix" evidence="12">
    <location>
        <begin position="519"/>
        <end position="521"/>
    </location>
</feature>
<feature type="helix" evidence="12">
    <location>
        <begin position="522"/>
        <end position="548"/>
    </location>
</feature>
<feature type="helix" evidence="12">
    <location>
        <begin position="554"/>
        <end position="576"/>
    </location>
</feature>
<feature type="helix" evidence="12">
    <location>
        <begin position="578"/>
        <end position="587"/>
    </location>
</feature>
<feature type="helix" evidence="12">
    <location>
        <begin position="718"/>
        <end position="725"/>
    </location>
</feature>
<feature type="helix" evidence="12">
    <location>
        <begin position="728"/>
        <end position="731"/>
    </location>
</feature>
<feature type="helix" evidence="12">
    <location>
        <begin position="733"/>
        <end position="753"/>
    </location>
</feature>
<feature type="helix" evidence="12">
    <location>
        <begin position="763"/>
        <end position="765"/>
    </location>
</feature>
<feature type="strand" evidence="12">
    <location>
        <begin position="769"/>
        <end position="771"/>
    </location>
</feature>
<feature type="helix" evidence="12">
    <location>
        <begin position="772"/>
        <end position="783"/>
    </location>
</feature>
<feature type="strand" evidence="12">
    <location>
        <begin position="787"/>
        <end position="793"/>
    </location>
</feature>
<feature type="helix" evidence="12">
    <location>
        <begin position="798"/>
        <end position="800"/>
    </location>
</feature>
<feature type="helix" evidence="12">
    <location>
        <begin position="802"/>
        <end position="811"/>
    </location>
</feature>
<feature type="helix" evidence="12">
    <location>
        <begin position="812"/>
        <end position="814"/>
    </location>
</feature>
<feature type="turn" evidence="13">
    <location>
        <begin position="822"/>
        <end position="824"/>
    </location>
</feature>
<feature type="helix" evidence="12">
    <location>
        <begin position="830"/>
        <end position="850"/>
    </location>
</feature>
<feature type="helix" evidence="12">
    <location>
        <begin position="864"/>
        <end position="873"/>
    </location>
</feature>
<feature type="strand" evidence="12">
    <location>
        <begin position="879"/>
        <end position="881"/>
    </location>
</feature>
<feature type="helix" evidence="12">
    <location>
        <begin position="886"/>
        <end position="889"/>
    </location>
</feature>
<feature type="turn" evidence="12">
    <location>
        <begin position="895"/>
        <end position="897"/>
    </location>
</feature>
<feature type="helix" evidence="12">
    <location>
        <begin position="905"/>
        <end position="915"/>
    </location>
</feature>
<feature type="helix" evidence="12">
    <location>
        <begin position="917"/>
        <end position="923"/>
    </location>
</feature>
<feature type="helix" evidence="12">
    <location>
        <begin position="943"/>
        <end position="946"/>
    </location>
</feature>
<feature type="strand" evidence="12">
    <location>
        <begin position="957"/>
        <end position="964"/>
    </location>
</feature>
<feature type="helix" evidence="12">
    <location>
        <begin position="971"/>
        <end position="988"/>
    </location>
</feature>
<feature type="turn" evidence="12">
    <location>
        <begin position="989"/>
        <end position="991"/>
    </location>
</feature>
<feature type="strand" evidence="12">
    <location>
        <begin position="994"/>
        <end position="998"/>
    </location>
</feature>
<feature type="helix" evidence="12">
    <location>
        <begin position="999"/>
        <end position="1001"/>
    </location>
</feature>
<feature type="helix" evidence="12">
    <location>
        <begin position="1006"/>
        <end position="1008"/>
    </location>
</feature>
<feature type="helix" evidence="12">
    <location>
        <begin position="1010"/>
        <end position="1033"/>
    </location>
</feature>
<feature type="helix" evidence="12">
    <location>
        <begin position="1036"/>
        <end position="1060"/>
    </location>
</feature>
<feature type="helix" evidence="12">
    <location>
        <begin position="1066"/>
        <end position="1078"/>
    </location>
</feature>
<feature type="helix" evidence="12">
    <location>
        <begin position="1079"/>
        <end position="1081"/>
    </location>
</feature>
<feature type="helix" evidence="12">
    <location>
        <begin position="1084"/>
        <end position="1091"/>
    </location>
</feature>
<feature type="helix" evidence="12">
    <location>
        <begin position="1097"/>
        <end position="1124"/>
    </location>
</feature>
<feature type="helix" evidence="12">
    <location>
        <begin position="1125"/>
        <end position="1128"/>
    </location>
</feature>
<feature type="helix" evidence="12">
    <location>
        <begin position="1132"/>
        <end position="1137"/>
    </location>
</feature>
<feature type="helix" evidence="12">
    <location>
        <begin position="1139"/>
        <end position="1153"/>
    </location>
</feature>
<feature type="helix" evidence="12">
    <location>
        <begin position="1156"/>
        <end position="1163"/>
    </location>
</feature>
<accession>Q61115</accession>
<reference key="1">
    <citation type="journal article" date="1996" name="Genes Dev.">
        <title>Conservation of the hedgehog/patched signaling pathway from flies to mice: induction of a mouse patched gene by Hedgehog.</title>
        <authorList>
            <person name="Goodrich L.V."/>
            <person name="Johnson R.L."/>
            <person name="Milenkovic L."/>
            <person name="McMahon J.A."/>
            <person name="Scott M.P."/>
        </authorList>
    </citation>
    <scope>NUCLEOTIDE SEQUENCE [MRNA]</scope>
    <scope>TISSUE SPECIFICITY</scope>
    <scope>DEVELOPMENTAL STAGE</scope>
    <source>
        <tissue>Embryo</tissue>
    </source>
</reference>
<reference key="2">
    <citation type="journal article" date="2010" name="Cell">
        <title>A tissue-specific atlas of mouse protein phosphorylation and expression.</title>
        <authorList>
            <person name="Huttlin E.L."/>
            <person name="Jedrychowski M.P."/>
            <person name="Elias J.E."/>
            <person name="Goswami T."/>
            <person name="Rad R."/>
            <person name="Beausoleil S.A."/>
            <person name="Villen J."/>
            <person name="Haas W."/>
            <person name="Sowa M.E."/>
            <person name="Gygi S.P."/>
        </authorList>
    </citation>
    <scope>PHOSPHORYLATION [LARGE SCALE ANALYSIS] AT THR-1181 AND SER-1183</scope>
    <scope>IDENTIFICATION BY MASS SPECTROMETRY [LARGE SCALE ANALYSIS]</scope>
    <source>
        <tissue>Kidney</tissue>
        <tissue>Spleen</tissue>
    </source>
</reference>
<reference key="3">
    <citation type="journal article" date="2011" name="Cell Res.">
        <title>Indian hedgehog mutations causing brachydactyly type A1 impair Hedgehog signal transduction at multiple levels.</title>
        <authorList>
            <person name="Ma G."/>
            <person name="Yu J."/>
            <person name="Xiao Y."/>
            <person name="Chan D."/>
            <person name="Gao B."/>
            <person name="Hu J."/>
            <person name="He Y."/>
            <person name="Guo S."/>
            <person name="Zhou J."/>
            <person name="Zhang L."/>
            <person name="Gao L."/>
            <person name="Zhang W."/>
            <person name="Kang Y."/>
            <person name="Cheah K.S."/>
            <person name="Feng G."/>
            <person name="Guo X."/>
            <person name="Wang Y."/>
            <person name="Zhou C.Z."/>
            <person name="He L."/>
        </authorList>
    </citation>
    <scope>FUNCTION</scope>
    <scope>INTERACTION WITH IHH</scope>
</reference>
<reference key="4">
    <citation type="journal article" date="2013" name="Proc. Natl. Acad. Sci. U.S.A.">
        <title>Precocious cerebellum development and improved motor functions in mice lacking the astrocyte cilium-, patched 1-associated Gpr37l1 receptor.</title>
        <authorList>
            <person name="Marazziti D."/>
            <person name="Di Pietro C."/>
            <person name="Golini E."/>
            <person name="Mandillo S."/>
            <person name="La Sala G."/>
            <person name="Matteoni R."/>
            <person name="Tocchini-Valentini G.P."/>
        </authorList>
    </citation>
    <scope>INTERACTION WITH GPR37L1</scope>
    <scope>SUBCELLULAR LOCATION</scope>
    <scope>TISSUE SPECIFICITY</scope>
</reference>
<reference key="5">
    <citation type="journal article" date="2014" name="Mol. Cell. Biol.">
        <title>Patched-1 proapoptotic activity is downregulated by modification of K1413 by the E3 ubiquitin-protein ligase Itchy homolog.</title>
        <authorList>
            <person name="Chen X.L."/>
            <person name="Chinchilla P."/>
            <person name="Fombonne J."/>
            <person name="Ho L."/>
            <person name="Guix C."/>
            <person name="Keen J.H."/>
            <person name="Mehlen P."/>
            <person name="Riobo N.A."/>
        </authorList>
    </citation>
    <scope>UBIQUITINATION AT LYS-1413</scope>
    <scope>MUTAGENESIS OF LYS-1413</scope>
</reference>
<sequence length="1434" mass="159273">MASAGNAAGALGRQAGGGRRRRTGGPHRAAPDRDYLHRPSYCDAAFALEQISKGKATGRKAPLWLRAKFQRLLFKLGCYIQKNCGKFLVVGLLIFGAFAVGLKAANLETNVEELWVEVGGRVSRELNYTRQKIGEEAMFNPQLMIQTPKEEGANVLTTEALLQHLDSALQASRVHVYMYNRQWKLEHLCYKSGELITETGYMDQIIEYLYPCLIITPLDCFWEGAKLQSGTAYLLGKPPLRWTNFDPLEFLEELKKINYQVDSWEEMLNKAEVGHGYMDRPCLNPADPDCPATAPNKNSTKPLDVALVLNGGCQGLSRKYMHWQEELIVGGTVKNATGKLVSAHALQTMFQLMTPKQMYEHFRGYDYVSHINWNEDRAAAILEAWQRTYVEVVHQSVAPNSTQKVLPFTTTTLDDILKSFSDVSVIRVASGYLLMLAYACLTMLRWDCSKSQGAVGLAGVLLVALSVAAGLGLCSLIGISFNAATTQVLPFLALGVGVDDVFLLAHAFSETGQNKRIPFEDRTGECLKRTGASVALTSISNVTAFFMAALIPIPALRAFSLQAAVVVVFNFAMVLLIFPAILSMDLYRREDRRLDIFCCFTSPCVSRVIQVEPQAYTEPHSNTRYSPPPPYTSHSFAHETHITMQSTVQLRTEYDPHTHVYYTTAEPRSEISVQPVTVTQDNLSCQSPESTSSTRDLLSQFSDSSLHCLEPPCTKWTLSSFAEKHYAPFLLKPKAKVVVILLFLGLLGVSLYGTTRVRDGLDLTDIVPRETREYDFIAAQFKYFSFYNMYIVTQKADYPNIQHLLYDLHKSFSNVKYVMLEENKQLPQMWLHYFRDWLQGLQDAFDSDWETGRIMPNNYKNGSDDGVLAYKLLVQTGSRDKPIDISQLTKQRLVDADGIINPSAFYIYLTAWVSNDPVAYAASQANIRPHRPEWVHDKADYMPETRLRIPAAEPIEYAQFPFYLNGLRDTSDFVEAIEKVRVICNNYTSLGLSSYPNGYPFLFWEQYISLRHWLLLSISVVLACTFLVCAVFLLNPWTAGIIVMVLALMTVELFGMMGLIGIKLSAVPVVILIASVGIGVEFTVHVALAFLTAIGDKNHRAMLALEHMFAPVLDGAVSTLLGVLMLAGSEFDFIVRYFFAVLAILTVLGVLNGLVLLPVLLSFFGPCPEVSPANGLNRLPTPSPEPPPSVVRFAVPPGHTNNGSDSSDSEYSSQTTVSGISEELRQYEAQQGAGGPAHQVIVEATENPVFARSTVVHPDSRHQPPLTPRQQPHLDSGSLSPGRQGQQPRRDPPREGLRPPPYRPRRDAFEISTEGHSGPSNRDRSGPRGARSHNPRNPTSTAMGSSVPSYCQPITTVTASASVTVAVHPPPGPGRNPRGGPCPGYESYPETDHGVFEDPHVPFHVRCERRDSKVEVIELQDVECEERPWGSSSN</sequence>